<name>HIS7_METVS</name>
<sequence length="190" mass="21186">MRAFKVKRDTNETKIHLELNIDGTGKYSINTGIPFFNHVLSSFAKHGAFDVILDVLGDLEIDDHHTVEDTGIVLGKAFESIEKNNIKRFGFAIIPMDEAKATVTIDIGGRPYLVGKYNPNTEKIGNFSTENVVHFFESFSNNAKVNMHFEVTGENEHHKVEALFKAFGIAMDMATQPDERKGIVSTKGII</sequence>
<proteinExistence type="inferred from homology"/>
<organism>
    <name type="scientific">Methanococcus vannielii (strain ATCC 35089 / DSM 1224 / JCM 13029 / OCM 148 / SB)</name>
    <dbReference type="NCBI Taxonomy" id="406327"/>
    <lineage>
        <taxon>Archaea</taxon>
        <taxon>Methanobacteriati</taxon>
        <taxon>Methanobacteriota</taxon>
        <taxon>Methanomada group</taxon>
        <taxon>Methanococci</taxon>
        <taxon>Methanococcales</taxon>
        <taxon>Methanococcaceae</taxon>
        <taxon>Methanococcus</taxon>
    </lineage>
</organism>
<protein>
    <recommendedName>
        <fullName evidence="1">Imidazoleglycerol-phosphate dehydratase</fullName>
        <shortName evidence="1">IGPD</shortName>
        <ecNumber evidence="1">4.2.1.19</ecNumber>
    </recommendedName>
</protein>
<dbReference type="EC" id="4.2.1.19" evidence="1"/>
<dbReference type="EMBL" id="CP000742">
    <property type="protein sequence ID" value="ABR53917.1"/>
    <property type="molecule type" value="Genomic_DNA"/>
</dbReference>
<dbReference type="RefSeq" id="WP_011971821.1">
    <property type="nucleotide sequence ID" value="NC_009634.1"/>
</dbReference>
<dbReference type="SMR" id="A6UN45"/>
<dbReference type="STRING" id="406327.Mevan_0002"/>
<dbReference type="GeneID" id="5325956"/>
<dbReference type="KEGG" id="mvn:Mevan_0002"/>
<dbReference type="eggNOG" id="arCOG04398">
    <property type="taxonomic scope" value="Archaea"/>
</dbReference>
<dbReference type="HOGENOM" id="CLU_044308_2_0_2"/>
<dbReference type="OrthoDB" id="103579at2157"/>
<dbReference type="UniPathway" id="UPA00031">
    <property type="reaction ID" value="UER00011"/>
</dbReference>
<dbReference type="Proteomes" id="UP000001107">
    <property type="component" value="Chromosome"/>
</dbReference>
<dbReference type="GO" id="GO:0005737">
    <property type="term" value="C:cytoplasm"/>
    <property type="evidence" value="ECO:0007669"/>
    <property type="project" value="UniProtKB-SubCell"/>
</dbReference>
<dbReference type="GO" id="GO:0004424">
    <property type="term" value="F:imidazoleglycerol-phosphate dehydratase activity"/>
    <property type="evidence" value="ECO:0007669"/>
    <property type="project" value="UniProtKB-UniRule"/>
</dbReference>
<dbReference type="GO" id="GO:0000105">
    <property type="term" value="P:L-histidine biosynthetic process"/>
    <property type="evidence" value="ECO:0007669"/>
    <property type="project" value="UniProtKB-UniRule"/>
</dbReference>
<dbReference type="CDD" id="cd07914">
    <property type="entry name" value="IGPD"/>
    <property type="match status" value="1"/>
</dbReference>
<dbReference type="FunFam" id="3.30.230.40:FF:000001">
    <property type="entry name" value="Imidazoleglycerol-phosphate dehydratase HisB"/>
    <property type="match status" value="1"/>
</dbReference>
<dbReference type="FunFam" id="3.30.230.40:FF:000003">
    <property type="entry name" value="Imidazoleglycerol-phosphate dehydratase HisB"/>
    <property type="match status" value="1"/>
</dbReference>
<dbReference type="Gene3D" id="3.30.230.40">
    <property type="entry name" value="Imidazole glycerol phosphate dehydratase, domain 1"/>
    <property type="match status" value="2"/>
</dbReference>
<dbReference type="HAMAP" id="MF_00076">
    <property type="entry name" value="HisB"/>
    <property type="match status" value="1"/>
</dbReference>
<dbReference type="InterPro" id="IPR038494">
    <property type="entry name" value="IGPD_sf"/>
</dbReference>
<dbReference type="InterPro" id="IPR000807">
    <property type="entry name" value="ImidazoleglycerolP_deHydtase"/>
</dbReference>
<dbReference type="InterPro" id="IPR020565">
    <property type="entry name" value="ImidazoleglycerP_deHydtase_CS"/>
</dbReference>
<dbReference type="InterPro" id="IPR020568">
    <property type="entry name" value="Ribosomal_Su5_D2-typ_SF"/>
</dbReference>
<dbReference type="NCBIfam" id="NF002111">
    <property type="entry name" value="PRK00951.2-1"/>
    <property type="match status" value="1"/>
</dbReference>
<dbReference type="NCBIfam" id="NF002113">
    <property type="entry name" value="PRK00951.2-3"/>
    <property type="match status" value="1"/>
</dbReference>
<dbReference type="NCBIfam" id="NF002114">
    <property type="entry name" value="PRK00951.2-4"/>
    <property type="match status" value="1"/>
</dbReference>
<dbReference type="PANTHER" id="PTHR23133:SF2">
    <property type="entry name" value="IMIDAZOLEGLYCEROL-PHOSPHATE DEHYDRATASE"/>
    <property type="match status" value="1"/>
</dbReference>
<dbReference type="PANTHER" id="PTHR23133">
    <property type="entry name" value="IMIDAZOLEGLYCEROL-PHOSPHATE DEHYDRATASE HIS7"/>
    <property type="match status" value="1"/>
</dbReference>
<dbReference type="Pfam" id="PF00475">
    <property type="entry name" value="IGPD"/>
    <property type="match status" value="1"/>
</dbReference>
<dbReference type="SUPFAM" id="SSF54211">
    <property type="entry name" value="Ribosomal protein S5 domain 2-like"/>
    <property type="match status" value="2"/>
</dbReference>
<dbReference type="PROSITE" id="PS00954">
    <property type="entry name" value="IGP_DEHYDRATASE_1"/>
    <property type="match status" value="1"/>
</dbReference>
<dbReference type="PROSITE" id="PS00955">
    <property type="entry name" value="IGP_DEHYDRATASE_2"/>
    <property type="match status" value="1"/>
</dbReference>
<comment type="catalytic activity">
    <reaction evidence="1">
        <text>D-erythro-1-(imidazol-4-yl)glycerol 3-phosphate = 3-(imidazol-4-yl)-2-oxopropyl phosphate + H2O</text>
        <dbReference type="Rhea" id="RHEA:11040"/>
        <dbReference type="ChEBI" id="CHEBI:15377"/>
        <dbReference type="ChEBI" id="CHEBI:57766"/>
        <dbReference type="ChEBI" id="CHEBI:58278"/>
        <dbReference type="EC" id="4.2.1.19"/>
    </reaction>
</comment>
<comment type="pathway">
    <text evidence="1">Amino-acid biosynthesis; L-histidine biosynthesis; L-histidine from 5-phospho-alpha-D-ribose 1-diphosphate: step 6/9.</text>
</comment>
<comment type="subcellular location">
    <subcellularLocation>
        <location evidence="1">Cytoplasm</location>
    </subcellularLocation>
</comment>
<comment type="similarity">
    <text evidence="1">Belongs to the imidazoleglycerol-phosphate dehydratase family.</text>
</comment>
<reference key="1">
    <citation type="submission" date="2007-06" db="EMBL/GenBank/DDBJ databases">
        <title>Complete sequence of Methanococcus vannielii SB.</title>
        <authorList>
            <consortium name="US DOE Joint Genome Institute"/>
            <person name="Copeland A."/>
            <person name="Lucas S."/>
            <person name="Lapidus A."/>
            <person name="Barry K."/>
            <person name="Glavina del Rio T."/>
            <person name="Dalin E."/>
            <person name="Tice H."/>
            <person name="Pitluck S."/>
            <person name="Chain P."/>
            <person name="Malfatti S."/>
            <person name="Shin M."/>
            <person name="Vergez L."/>
            <person name="Schmutz J."/>
            <person name="Larimer F."/>
            <person name="Land M."/>
            <person name="Hauser L."/>
            <person name="Kyrpides N."/>
            <person name="Anderson I."/>
            <person name="Sieprawska-Lupa M."/>
            <person name="Whitman W.B."/>
            <person name="Richardson P."/>
        </authorList>
    </citation>
    <scope>NUCLEOTIDE SEQUENCE [LARGE SCALE GENOMIC DNA]</scope>
    <source>
        <strain>ATCC 35089 / DSM 1224 / JCM 13029 / OCM 148 / SB</strain>
    </source>
</reference>
<evidence type="ECO:0000255" key="1">
    <source>
        <dbReference type="HAMAP-Rule" id="MF_00076"/>
    </source>
</evidence>
<gene>
    <name evidence="1" type="primary">hisB</name>
    <name type="ordered locus">Mevan_0002</name>
</gene>
<feature type="chain" id="PRO_1000010299" description="Imidazoleglycerol-phosphate dehydratase">
    <location>
        <begin position="1"/>
        <end position="190"/>
    </location>
</feature>
<keyword id="KW-0028">Amino-acid biosynthesis</keyword>
<keyword id="KW-0963">Cytoplasm</keyword>
<keyword id="KW-0368">Histidine biosynthesis</keyword>
<keyword id="KW-0456">Lyase</keyword>
<accession>A6UN45</accession>